<comment type="function">
    <text evidence="1">Catalyzes the methylthiolation of N6-(dimethylallyl)adenosine (i(6)A), leading to the formation of 2-methylthio-N6-(dimethylallyl)adenosine (ms(2)i(6)A) at position 37 in tRNAs that read codons beginning with uridine.</text>
</comment>
<comment type="catalytic activity">
    <reaction evidence="1">
        <text>N(6)-dimethylallyladenosine(37) in tRNA + (sulfur carrier)-SH + AH2 + 2 S-adenosyl-L-methionine = 2-methylsulfanyl-N(6)-dimethylallyladenosine(37) in tRNA + (sulfur carrier)-H + 5'-deoxyadenosine + L-methionine + A + S-adenosyl-L-homocysteine + 2 H(+)</text>
        <dbReference type="Rhea" id="RHEA:37067"/>
        <dbReference type="Rhea" id="RHEA-COMP:10375"/>
        <dbReference type="Rhea" id="RHEA-COMP:10376"/>
        <dbReference type="Rhea" id="RHEA-COMP:14737"/>
        <dbReference type="Rhea" id="RHEA-COMP:14739"/>
        <dbReference type="ChEBI" id="CHEBI:13193"/>
        <dbReference type="ChEBI" id="CHEBI:15378"/>
        <dbReference type="ChEBI" id="CHEBI:17319"/>
        <dbReference type="ChEBI" id="CHEBI:17499"/>
        <dbReference type="ChEBI" id="CHEBI:29917"/>
        <dbReference type="ChEBI" id="CHEBI:57844"/>
        <dbReference type="ChEBI" id="CHEBI:57856"/>
        <dbReference type="ChEBI" id="CHEBI:59789"/>
        <dbReference type="ChEBI" id="CHEBI:64428"/>
        <dbReference type="ChEBI" id="CHEBI:74415"/>
        <dbReference type="ChEBI" id="CHEBI:74417"/>
        <dbReference type="EC" id="2.8.4.3"/>
    </reaction>
</comment>
<comment type="cofactor">
    <cofactor evidence="1">
        <name>[4Fe-4S] cluster</name>
        <dbReference type="ChEBI" id="CHEBI:49883"/>
    </cofactor>
    <text evidence="1">Binds 2 [4Fe-4S] clusters. One cluster is coordinated with 3 cysteines and an exchangeable S-adenosyl-L-methionine.</text>
</comment>
<comment type="subunit">
    <text evidence="1">Monomer.</text>
</comment>
<comment type="subcellular location">
    <subcellularLocation>
        <location evidence="1">Cytoplasm</location>
    </subcellularLocation>
</comment>
<comment type="similarity">
    <text evidence="1">Belongs to the methylthiotransferase family. MiaB subfamily.</text>
</comment>
<keyword id="KW-0004">4Fe-4S</keyword>
<keyword id="KW-0963">Cytoplasm</keyword>
<keyword id="KW-0408">Iron</keyword>
<keyword id="KW-0411">Iron-sulfur</keyword>
<keyword id="KW-0479">Metal-binding</keyword>
<keyword id="KW-1185">Reference proteome</keyword>
<keyword id="KW-0949">S-adenosyl-L-methionine</keyword>
<keyword id="KW-0808">Transferase</keyword>
<keyword id="KW-0819">tRNA processing</keyword>
<accession>A3N1X3</accession>
<evidence type="ECO:0000255" key="1">
    <source>
        <dbReference type="HAMAP-Rule" id="MF_01864"/>
    </source>
</evidence>
<evidence type="ECO:0000255" key="2">
    <source>
        <dbReference type="PROSITE-ProRule" id="PRU01266"/>
    </source>
</evidence>
<dbReference type="EC" id="2.8.4.3" evidence="1"/>
<dbReference type="EMBL" id="CP000569">
    <property type="protein sequence ID" value="ABN74409.1"/>
    <property type="molecule type" value="Genomic_DNA"/>
</dbReference>
<dbReference type="RefSeq" id="WP_005617789.1">
    <property type="nucleotide sequence ID" value="NC_009053.1"/>
</dbReference>
<dbReference type="SMR" id="A3N1X3"/>
<dbReference type="STRING" id="416269.APL_1325"/>
<dbReference type="EnsemblBacteria" id="ABN74409">
    <property type="protein sequence ID" value="ABN74409"/>
    <property type="gene ID" value="APL_1325"/>
</dbReference>
<dbReference type="KEGG" id="apl:APL_1325"/>
<dbReference type="eggNOG" id="COG0621">
    <property type="taxonomic scope" value="Bacteria"/>
</dbReference>
<dbReference type="HOGENOM" id="CLU_018697_2_0_6"/>
<dbReference type="Proteomes" id="UP000001432">
    <property type="component" value="Chromosome"/>
</dbReference>
<dbReference type="GO" id="GO:0005829">
    <property type="term" value="C:cytosol"/>
    <property type="evidence" value="ECO:0007669"/>
    <property type="project" value="TreeGrafter"/>
</dbReference>
<dbReference type="GO" id="GO:0051539">
    <property type="term" value="F:4 iron, 4 sulfur cluster binding"/>
    <property type="evidence" value="ECO:0007669"/>
    <property type="project" value="UniProtKB-UniRule"/>
</dbReference>
<dbReference type="GO" id="GO:0046872">
    <property type="term" value="F:metal ion binding"/>
    <property type="evidence" value="ECO:0007669"/>
    <property type="project" value="UniProtKB-KW"/>
</dbReference>
<dbReference type="GO" id="GO:0035597">
    <property type="term" value="F:N6-isopentenyladenosine methylthiotransferase activity"/>
    <property type="evidence" value="ECO:0007669"/>
    <property type="project" value="TreeGrafter"/>
</dbReference>
<dbReference type="CDD" id="cd01335">
    <property type="entry name" value="Radical_SAM"/>
    <property type="match status" value="1"/>
</dbReference>
<dbReference type="FunFam" id="3.40.50.12160:FF:000001">
    <property type="entry name" value="tRNA-2-methylthio-N(6)-dimethylallyladenosine synthase"/>
    <property type="match status" value="1"/>
</dbReference>
<dbReference type="FunFam" id="3.80.30.20:FF:000001">
    <property type="entry name" value="tRNA-2-methylthio-N(6)-dimethylallyladenosine synthase 2"/>
    <property type="match status" value="1"/>
</dbReference>
<dbReference type="Gene3D" id="3.40.50.12160">
    <property type="entry name" value="Methylthiotransferase, N-terminal domain"/>
    <property type="match status" value="1"/>
</dbReference>
<dbReference type="Gene3D" id="3.80.30.20">
    <property type="entry name" value="tm_1862 like domain"/>
    <property type="match status" value="1"/>
</dbReference>
<dbReference type="HAMAP" id="MF_01864">
    <property type="entry name" value="tRNA_metthiotr_MiaB"/>
    <property type="match status" value="1"/>
</dbReference>
<dbReference type="InterPro" id="IPR006638">
    <property type="entry name" value="Elp3/MiaA/NifB-like_rSAM"/>
</dbReference>
<dbReference type="InterPro" id="IPR005839">
    <property type="entry name" value="Methylthiotransferase"/>
</dbReference>
<dbReference type="InterPro" id="IPR020612">
    <property type="entry name" value="Methylthiotransferase_CS"/>
</dbReference>
<dbReference type="InterPro" id="IPR013848">
    <property type="entry name" value="Methylthiotransferase_N"/>
</dbReference>
<dbReference type="InterPro" id="IPR038135">
    <property type="entry name" value="Methylthiotransferase_N_sf"/>
</dbReference>
<dbReference type="InterPro" id="IPR006463">
    <property type="entry name" value="MiaB_methiolase"/>
</dbReference>
<dbReference type="InterPro" id="IPR007197">
    <property type="entry name" value="rSAM"/>
</dbReference>
<dbReference type="InterPro" id="IPR023404">
    <property type="entry name" value="rSAM_horseshoe"/>
</dbReference>
<dbReference type="InterPro" id="IPR002792">
    <property type="entry name" value="TRAM_dom"/>
</dbReference>
<dbReference type="NCBIfam" id="TIGR01574">
    <property type="entry name" value="miaB-methiolase"/>
    <property type="match status" value="1"/>
</dbReference>
<dbReference type="NCBIfam" id="TIGR00089">
    <property type="entry name" value="MiaB/RimO family radical SAM methylthiotransferase"/>
    <property type="match status" value="1"/>
</dbReference>
<dbReference type="PANTHER" id="PTHR43020">
    <property type="entry name" value="CDK5 REGULATORY SUBUNIT-ASSOCIATED PROTEIN 1"/>
    <property type="match status" value="1"/>
</dbReference>
<dbReference type="PANTHER" id="PTHR43020:SF2">
    <property type="entry name" value="MITOCHONDRIAL TRNA METHYLTHIOTRANSFERASE CDK5RAP1"/>
    <property type="match status" value="1"/>
</dbReference>
<dbReference type="Pfam" id="PF04055">
    <property type="entry name" value="Radical_SAM"/>
    <property type="match status" value="1"/>
</dbReference>
<dbReference type="Pfam" id="PF01938">
    <property type="entry name" value="TRAM"/>
    <property type="match status" value="1"/>
</dbReference>
<dbReference type="Pfam" id="PF00919">
    <property type="entry name" value="UPF0004"/>
    <property type="match status" value="1"/>
</dbReference>
<dbReference type="SFLD" id="SFLDF00273">
    <property type="entry name" value="(dimethylallyl)adenosine_tRNA"/>
    <property type="match status" value="1"/>
</dbReference>
<dbReference type="SFLD" id="SFLDG01082">
    <property type="entry name" value="B12-binding_domain_containing"/>
    <property type="match status" value="1"/>
</dbReference>
<dbReference type="SFLD" id="SFLDS00029">
    <property type="entry name" value="Radical_SAM"/>
    <property type="match status" value="1"/>
</dbReference>
<dbReference type="SMART" id="SM00729">
    <property type="entry name" value="Elp3"/>
    <property type="match status" value="1"/>
</dbReference>
<dbReference type="SUPFAM" id="SSF102114">
    <property type="entry name" value="Radical SAM enzymes"/>
    <property type="match status" value="1"/>
</dbReference>
<dbReference type="PROSITE" id="PS51449">
    <property type="entry name" value="MTTASE_N"/>
    <property type="match status" value="1"/>
</dbReference>
<dbReference type="PROSITE" id="PS01278">
    <property type="entry name" value="MTTASE_RADICAL"/>
    <property type="match status" value="1"/>
</dbReference>
<dbReference type="PROSITE" id="PS51918">
    <property type="entry name" value="RADICAL_SAM"/>
    <property type="match status" value="1"/>
</dbReference>
<dbReference type="PROSITE" id="PS50926">
    <property type="entry name" value="TRAM"/>
    <property type="match status" value="1"/>
</dbReference>
<sequence length="475" mass="53670">MAKLHITTWGCQMNEYDSSKMADLLNSTHGLELTDKPEEADVLLLNTCSIREKAQEKVFSQLGRWKNWKKDKPDLIIGVGGCVASQEGEHIRDRAPFVDIVFGPQTLHRLPEMINKIRGGDRAIVDISFPEIEKFDRLPEPRAEGPTAFVSIMEGCNKYCSFCVVPYTRGEEVSRPVDDVLFEIAQLAEQGVREVNLLGQNVNAYRGETFDGGICTFAELLRLVAAIDGIDRVRYTTSHPIEFTDDIIEVYRDTPELVSFLHLPIQSGADRVLTMMKRNHTALEYKAIIRKLREVRPNIQISSDFIVGFPGETAEDFEQTMKVIEQVNFDMSFSFIYSARPGTPAADLPDDISEEEKKERLARLQQRINHQAMQFSRAMLGTEQRVLVEGPSKKDIMELTGRTENNRIVNFQGTPDMIGKFVDIKITDVYTNSLRGDVVRTEDEMGLRVVESAASVIARTRKEDDLGVGKYVVNL</sequence>
<protein>
    <recommendedName>
        <fullName evidence="1">tRNA-2-methylthio-N(6)-dimethylallyladenosine synthase</fullName>
        <ecNumber evidence="1">2.8.4.3</ecNumber>
    </recommendedName>
    <alternativeName>
        <fullName evidence="1">(Dimethylallyl)adenosine tRNA methylthiotransferase MiaB</fullName>
    </alternativeName>
    <alternativeName>
        <fullName evidence="1">tRNA-i(6)A37 methylthiotransferase</fullName>
    </alternativeName>
</protein>
<name>MIAB_ACTP2</name>
<reference key="1">
    <citation type="journal article" date="2008" name="J. Bacteriol.">
        <title>The complete genome sequence of Actinobacillus pleuropneumoniae L20 (serotype 5b).</title>
        <authorList>
            <person name="Foote S.J."/>
            <person name="Bosse J.T."/>
            <person name="Bouevitch A.B."/>
            <person name="Langford P.R."/>
            <person name="Young N.M."/>
            <person name="Nash J.H.E."/>
        </authorList>
    </citation>
    <scope>NUCLEOTIDE SEQUENCE [LARGE SCALE GENOMIC DNA]</scope>
    <source>
        <strain>L20</strain>
    </source>
</reference>
<gene>
    <name evidence="1" type="primary">miaB</name>
    <name type="ordered locus">APL_1325</name>
</gene>
<proteinExistence type="inferred from homology"/>
<feature type="chain" id="PRO_0000374094" description="tRNA-2-methylthio-N(6)-dimethylallyladenosine synthase">
    <location>
        <begin position="1"/>
        <end position="475"/>
    </location>
</feature>
<feature type="domain" description="MTTase N-terminal" evidence="1">
    <location>
        <begin position="2"/>
        <end position="119"/>
    </location>
</feature>
<feature type="domain" description="Radical SAM core" evidence="2">
    <location>
        <begin position="142"/>
        <end position="374"/>
    </location>
</feature>
<feature type="domain" description="TRAM" evidence="1">
    <location>
        <begin position="377"/>
        <end position="440"/>
    </location>
</feature>
<feature type="binding site" evidence="1">
    <location>
        <position position="11"/>
    </location>
    <ligand>
        <name>[4Fe-4S] cluster</name>
        <dbReference type="ChEBI" id="CHEBI:49883"/>
        <label>1</label>
    </ligand>
</feature>
<feature type="binding site" evidence="1">
    <location>
        <position position="48"/>
    </location>
    <ligand>
        <name>[4Fe-4S] cluster</name>
        <dbReference type="ChEBI" id="CHEBI:49883"/>
        <label>1</label>
    </ligand>
</feature>
<feature type="binding site" evidence="1">
    <location>
        <position position="82"/>
    </location>
    <ligand>
        <name>[4Fe-4S] cluster</name>
        <dbReference type="ChEBI" id="CHEBI:49883"/>
        <label>1</label>
    </ligand>
</feature>
<feature type="binding site" evidence="1">
    <location>
        <position position="156"/>
    </location>
    <ligand>
        <name>[4Fe-4S] cluster</name>
        <dbReference type="ChEBI" id="CHEBI:49883"/>
        <label>2</label>
        <note>4Fe-4S-S-AdoMet</note>
    </ligand>
</feature>
<feature type="binding site" evidence="1">
    <location>
        <position position="160"/>
    </location>
    <ligand>
        <name>[4Fe-4S] cluster</name>
        <dbReference type="ChEBI" id="CHEBI:49883"/>
        <label>2</label>
        <note>4Fe-4S-S-AdoMet</note>
    </ligand>
</feature>
<feature type="binding site" evidence="1">
    <location>
        <position position="163"/>
    </location>
    <ligand>
        <name>[4Fe-4S] cluster</name>
        <dbReference type="ChEBI" id="CHEBI:49883"/>
        <label>2</label>
        <note>4Fe-4S-S-AdoMet</note>
    </ligand>
</feature>
<organism>
    <name type="scientific">Actinobacillus pleuropneumoniae serotype 5b (strain L20)</name>
    <dbReference type="NCBI Taxonomy" id="416269"/>
    <lineage>
        <taxon>Bacteria</taxon>
        <taxon>Pseudomonadati</taxon>
        <taxon>Pseudomonadota</taxon>
        <taxon>Gammaproteobacteria</taxon>
        <taxon>Pasteurellales</taxon>
        <taxon>Pasteurellaceae</taxon>
        <taxon>Actinobacillus</taxon>
    </lineage>
</organism>